<organism>
    <name type="scientific">Bacillus subtilis (strain 168)</name>
    <dbReference type="NCBI Taxonomy" id="224308"/>
    <lineage>
        <taxon>Bacteria</taxon>
        <taxon>Bacillati</taxon>
        <taxon>Bacillota</taxon>
        <taxon>Bacilli</taxon>
        <taxon>Bacillales</taxon>
        <taxon>Bacillaceae</taxon>
        <taxon>Bacillus</taxon>
    </lineage>
</organism>
<accession>P37510</accession>
<dbReference type="EMBL" id="D26185">
    <property type="protein sequence ID" value="BAA05210.1"/>
    <property type="molecule type" value="Genomic_DNA"/>
</dbReference>
<dbReference type="EMBL" id="AL009126">
    <property type="protein sequence ID" value="CAB16117.1"/>
    <property type="molecule type" value="Genomic_DNA"/>
</dbReference>
<dbReference type="PIR" id="S66004">
    <property type="entry name" value="S66004"/>
</dbReference>
<dbReference type="RefSeq" id="NP_391960.1">
    <property type="nucleotide sequence ID" value="NC_000964.3"/>
</dbReference>
<dbReference type="RefSeq" id="WP_010886646.1">
    <property type="nucleotide sequence ID" value="NZ_OZ025638.1"/>
</dbReference>
<dbReference type="SMR" id="P37510"/>
<dbReference type="FunCoup" id="P37510">
    <property type="interactions" value="81"/>
</dbReference>
<dbReference type="IntAct" id="P37510">
    <property type="interactions" value="1"/>
</dbReference>
<dbReference type="STRING" id="224308.BSU40800"/>
<dbReference type="PaxDb" id="224308-BSU40800"/>
<dbReference type="EnsemblBacteria" id="CAB16117">
    <property type="protein sequence ID" value="CAB16117"/>
    <property type="gene ID" value="BSU_40800"/>
</dbReference>
<dbReference type="GeneID" id="937892"/>
<dbReference type="KEGG" id="bsu:BSU40800"/>
<dbReference type="PATRIC" id="fig|224308.43.peg.4287"/>
<dbReference type="eggNOG" id="COG0789">
    <property type="taxonomic scope" value="Bacteria"/>
</dbReference>
<dbReference type="InParanoid" id="P37510"/>
<dbReference type="OrthoDB" id="9811174at2"/>
<dbReference type="PhylomeDB" id="P37510"/>
<dbReference type="BioCyc" id="BSUB:BSU40800-MONOMER"/>
<dbReference type="Proteomes" id="UP000001570">
    <property type="component" value="Chromosome"/>
</dbReference>
<dbReference type="GO" id="GO:0003677">
    <property type="term" value="F:DNA binding"/>
    <property type="evidence" value="ECO:0007669"/>
    <property type="project" value="UniProtKB-KW"/>
</dbReference>
<dbReference type="GO" id="GO:0003700">
    <property type="term" value="F:DNA-binding transcription factor activity"/>
    <property type="evidence" value="ECO:0000318"/>
    <property type="project" value="GO_Central"/>
</dbReference>
<dbReference type="GO" id="GO:0006355">
    <property type="term" value="P:regulation of DNA-templated transcription"/>
    <property type="evidence" value="ECO:0000318"/>
    <property type="project" value="GO_Central"/>
</dbReference>
<dbReference type="CDD" id="cd01109">
    <property type="entry name" value="HTH_YyaN"/>
    <property type="match status" value="1"/>
</dbReference>
<dbReference type="Gene3D" id="1.10.1660.10">
    <property type="match status" value="1"/>
</dbReference>
<dbReference type="InterPro" id="IPR009061">
    <property type="entry name" value="DNA-bd_dom_put_sf"/>
</dbReference>
<dbReference type="InterPro" id="IPR000551">
    <property type="entry name" value="MerR-type_HTH_dom"/>
</dbReference>
<dbReference type="InterPro" id="IPR047057">
    <property type="entry name" value="MerR_fam"/>
</dbReference>
<dbReference type="PANTHER" id="PTHR30204">
    <property type="entry name" value="REDOX-CYCLING DRUG-SENSING TRANSCRIPTIONAL ACTIVATOR SOXR"/>
    <property type="match status" value="1"/>
</dbReference>
<dbReference type="PANTHER" id="PTHR30204:SF83">
    <property type="entry name" value="TRANSCRIPTIONAL REGULATOR, MERR FAMILY"/>
    <property type="match status" value="1"/>
</dbReference>
<dbReference type="Pfam" id="PF13411">
    <property type="entry name" value="MerR_1"/>
    <property type="match status" value="1"/>
</dbReference>
<dbReference type="PRINTS" id="PR00040">
    <property type="entry name" value="HTHMERR"/>
</dbReference>
<dbReference type="SMART" id="SM00422">
    <property type="entry name" value="HTH_MERR"/>
    <property type="match status" value="1"/>
</dbReference>
<dbReference type="SUPFAM" id="SSF46955">
    <property type="entry name" value="Putative DNA-binding domain"/>
    <property type="match status" value="1"/>
</dbReference>
<dbReference type="PROSITE" id="PS00552">
    <property type="entry name" value="HTH_MERR_1"/>
    <property type="match status" value="1"/>
</dbReference>
<dbReference type="PROSITE" id="PS50937">
    <property type="entry name" value="HTH_MERR_2"/>
    <property type="match status" value="1"/>
</dbReference>
<protein>
    <recommendedName>
        <fullName>Uncharacterized HTH-type transcriptional regulator YyaN</fullName>
    </recommendedName>
</protein>
<feature type="chain" id="PRO_0000098164" description="Uncharacterized HTH-type transcriptional regulator YyaN">
    <location>
        <begin position="1"/>
        <end position="138"/>
    </location>
</feature>
<feature type="domain" description="HTH merR-type" evidence="1">
    <location>
        <begin position="3"/>
        <end position="72"/>
    </location>
</feature>
<feature type="DNA-binding region" description="H-T-H motif" evidence="1">
    <location>
        <begin position="6"/>
        <end position="25"/>
    </location>
</feature>
<gene>
    <name type="primary">yyaN</name>
    <name type="ordered locus">BSU40800</name>
</gene>
<name>YYAN_BACSU</name>
<proteinExistence type="predicted"/>
<keyword id="KW-0238">DNA-binding</keyword>
<keyword id="KW-1185">Reference proteome</keyword>
<keyword id="KW-0804">Transcription</keyword>
<keyword id="KW-0805">Transcription regulation</keyword>
<evidence type="ECO:0000255" key="1">
    <source>
        <dbReference type="PROSITE-ProRule" id="PRU00254"/>
    </source>
</evidence>
<reference key="1">
    <citation type="journal article" date="1994" name="DNA Res.">
        <title>Systematic sequencing of the 180 kilobase region of the Bacillus subtilis chromosome containing the replication origin.</title>
        <authorList>
            <person name="Ogasawara N."/>
            <person name="Nakai S."/>
            <person name="Yoshikawa H."/>
        </authorList>
    </citation>
    <scope>NUCLEOTIDE SEQUENCE [GENOMIC DNA]</scope>
    <source>
        <strain>168</strain>
    </source>
</reference>
<reference key="2">
    <citation type="journal article" date="1997" name="Nature">
        <title>The complete genome sequence of the Gram-positive bacterium Bacillus subtilis.</title>
        <authorList>
            <person name="Kunst F."/>
            <person name="Ogasawara N."/>
            <person name="Moszer I."/>
            <person name="Albertini A.M."/>
            <person name="Alloni G."/>
            <person name="Azevedo V."/>
            <person name="Bertero M.G."/>
            <person name="Bessieres P."/>
            <person name="Bolotin A."/>
            <person name="Borchert S."/>
            <person name="Borriss R."/>
            <person name="Boursier L."/>
            <person name="Brans A."/>
            <person name="Braun M."/>
            <person name="Brignell S.C."/>
            <person name="Bron S."/>
            <person name="Brouillet S."/>
            <person name="Bruschi C.V."/>
            <person name="Caldwell B."/>
            <person name="Capuano V."/>
            <person name="Carter N.M."/>
            <person name="Choi S.-K."/>
            <person name="Codani J.-J."/>
            <person name="Connerton I.F."/>
            <person name="Cummings N.J."/>
            <person name="Daniel R.A."/>
            <person name="Denizot F."/>
            <person name="Devine K.M."/>
            <person name="Duesterhoeft A."/>
            <person name="Ehrlich S.D."/>
            <person name="Emmerson P.T."/>
            <person name="Entian K.-D."/>
            <person name="Errington J."/>
            <person name="Fabret C."/>
            <person name="Ferrari E."/>
            <person name="Foulger D."/>
            <person name="Fritz C."/>
            <person name="Fujita M."/>
            <person name="Fujita Y."/>
            <person name="Fuma S."/>
            <person name="Galizzi A."/>
            <person name="Galleron N."/>
            <person name="Ghim S.-Y."/>
            <person name="Glaser P."/>
            <person name="Goffeau A."/>
            <person name="Golightly E.J."/>
            <person name="Grandi G."/>
            <person name="Guiseppi G."/>
            <person name="Guy B.J."/>
            <person name="Haga K."/>
            <person name="Haiech J."/>
            <person name="Harwood C.R."/>
            <person name="Henaut A."/>
            <person name="Hilbert H."/>
            <person name="Holsappel S."/>
            <person name="Hosono S."/>
            <person name="Hullo M.-F."/>
            <person name="Itaya M."/>
            <person name="Jones L.-M."/>
            <person name="Joris B."/>
            <person name="Karamata D."/>
            <person name="Kasahara Y."/>
            <person name="Klaerr-Blanchard M."/>
            <person name="Klein C."/>
            <person name="Kobayashi Y."/>
            <person name="Koetter P."/>
            <person name="Koningstein G."/>
            <person name="Krogh S."/>
            <person name="Kumano M."/>
            <person name="Kurita K."/>
            <person name="Lapidus A."/>
            <person name="Lardinois S."/>
            <person name="Lauber J."/>
            <person name="Lazarevic V."/>
            <person name="Lee S.-M."/>
            <person name="Levine A."/>
            <person name="Liu H."/>
            <person name="Masuda S."/>
            <person name="Mauel C."/>
            <person name="Medigue C."/>
            <person name="Medina N."/>
            <person name="Mellado R.P."/>
            <person name="Mizuno M."/>
            <person name="Moestl D."/>
            <person name="Nakai S."/>
            <person name="Noback M."/>
            <person name="Noone D."/>
            <person name="O'Reilly M."/>
            <person name="Ogawa K."/>
            <person name="Ogiwara A."/>
            <person name="Oudega B."/>
            <person name="Park S.-H."/>
            <person name="Parro V."/>
            <person name="Pohl T.M."/>
            <person name="Portetelle D."/>
            <person name="Porwollik S."/>
            <person name="Prescott A.M."/>
            <person name="Presecan E."/>
            <person name="Pujic P."/>
            <person name="Purnelle B."/>
            <person name="Rapoport G."/>
            <person name="Rey M."/>
            <person name="Reynolds S."/>
            <person name="Rieger M."/>
            <person name="Rivolta C."/>
            <person name="Rocha E."/>
            <person name="Roche B."/>
            <person name="Rose M."/>
            <person name="Sadaie Y."/>
            <person name="Sato T."/>
            <person name="Scanlan E."/>
            <person name="Schleich S."/>
            <person name="Schroeter R."/>
            <person name="Scoffone F."/>
            <person name="Sekiguchi J."/>
            <person name="Sekowska A."/>
            <person name="Seror S.J."/>
            <person name="Serror P."/>
            <person name="Shin B.-S."/>
            <person name="Soldo B."/>
            <person name="Sorokin A."/>
            <person name="Tacconi E."/>
            <person name="Takagi T."/>
            <person name="Takahashi H."/>
            <person name="Takemaru K."/>
            <person name="Takeuchi M."/>
            <person name="Tamakoshi A."/>
            <person name="Tanaka T."/>
            <person name="Terpstra P."/>
            <person name="Tognoni A."/>
            <person name="Tosato V."/>
            <person name="Uchiyama S."/>
            <person name="Vandenbol M."/>
            <person name="Vannier F."/>
            <person name="Vassarotti A."/>
            <person name="Viari A."/>
            <person name="Wambutt R."/>
            <person name="Wedler E."/>
            <person name="Wedler H."/>
            <person name="Weitzenegger T."/>
            <person name="Winters P."/>
            <person name="Wipat A."/>
            <person name="Yamamoto H."/>
            <person name="Yamane K."/>
            <person name="Yasumoto K."/>
            <person name="Yata K."/>
            <person name="Yoshida K."/>
            <person name="Yoshikawa H.-F."/>
            <person name="Zumstein E."/>
            <person name="Yoshikawa H."/>
            <person name="Danchin A."/>
        </authorList>
    </citation>
    <scope>NUCLEOTIDE SEQUENCE [LARGE SCALE GENOMIC DNA]</scope>
    <source>
        <strain>168</strain>
    </source>
</reference>
<sequence>MLLYSISKAAEKTSISSYTLRYYEKIGLLPPPKRKNSGRRFYTETDIQFMLFLKSLKETGMSLEDINEFVKDGCILEKINSDVKSAQLSPSINKRIEILTKHLEKMEIKKRELEEVISTTKGKLDTYYSILKEEVENK</sequence>